<protein>
    <recommendedName>
        <fullName evidence="2">NADH-quinone oxidoreductase subunit B</fullName>
        <ecNumber evidence="2">7.1.1.-</ecNumber>
    </recommendedName>
    <alternativeName>
        <fullName evidence="2">NADH dehydrogenase I subunit B</fullName>
    </alternativeName>
    <alternativeName>
        <fullName evidence="2">NDH-1 subunit B</fullName>
    </alternativeName>
</protein>
<proteinExistence type="inferred from homology"/>
<accession>A6X1N3</accession>
<keyword id="KW-0004">4Fe-4S</keyword>
<keyword id="KW-0997">Cell inner membrane</keyword>
<keyword id="KW-1003">Cell membrane</keyword>
<keyword id="KW-0408">Iron</keyword>
<keyword id="KW-0411">Iron-sulfur</keyword>
<keyword id="KW-0472">Membrane</keyword>
<keyword id="KW-0479">Metal-binding</keyword>
<keyword id="KW-0520">NAD</keyword>
<keyword id="KW-0874">Quinone</keyword>
<keyword id="KW-1185">Reference proteome</keyword>
<keyword id="KW-1278">Translocase</keyword>
<keyword id="KW-0813">Transport</keyword>
<keyword id="KW-0830">Ubiquinone</keyword>
<organism>
    <name type="scientific">Brucella anthropi (strain ATCC 49188 / DSM 6882 / CCUG 24695 / JCM 21032 / LMG 3331 / NBRC 15819 / NCTC 12168 / Alc 37)</name>
    <name type="common">Ochrobactrum anthropi</name>
    <dbReference type="NCBI Taxonomy" id="439375"/>
    <lineage>
        <taxon>Bacteria</taxon>
        <taxon>Pseudomonadati</taxon>
        <taxon>Pseudomonadota</taxon>
        <taxon>Alphaproteobacteria</taxon>
        <taxon>Hyphomicrobiales</taxon>
        <taxon>Brucellaceae</taxon>
        <taxon>Brucella/Ochrobactrum group</taxon>
        <taxon>Brucella</taxon>
    </lineage>
</organism>
<reference key="1">
    <citation type="journal article" date="2011" name="J. Bacteriol.">
        <title>Genome of Ochrobactrum anthropi ATCC 49188 T, a versatile opportunistic pathogen and symbiont of several eukaryotic hosts.</title>
        <authorList>
            <person name="Chain P.S."/>
            <person name="Lang D.M."/>
            <person name="Comerci D.J."/>
            <person name="Malfatti S.A."/>
            <person name="Vergez L.M."/>
            <person name="Shin M."/>
            <person name="Ugalde R.A."/>
            <person name="Garcia E."/>
            <person name="Tolmasky M.E."/>
        </authorList>
    </citation>
    <scope>NUCLEOTIDE SEQUENCE [LARGE SCALE GENOMIC DNA]</scope>
    <source>
        <strain>ATCC 49188 / DSM 6882 / CCUG 24695 / JCM 21032 / LMG 3331 / NBRC 15819 / NCTC 12168 / Alc 37</strain>
    </source>
</reference>
<sequence>MGLTTANTTLVAPQPKGILDPRTGKPVGSDDAFFNDLNSELSDKGFIVTSADALITWARTGSLMWMTFGLACCAVEMMHISMPRYDAERFGIAPRASPRQSDVMIVAGTLTNKMAPALRKVYDQMPEPRYVISMGSCANGGGYYHYSYSVVRGCDRVVPVDIYVPGCPPTAEALLYGILMLQKKIRRTGTIER</sequence>
<name>NUOB_BRUA4</name>
<dbReference type="EC" id="7.1.1.-" evidence="2"/>
<dbReference type="EMBL" id="CP000758">
    <property type="protein sequence ID" value="ABS15137.1"/>
    <property type="molecule type" value="Genomic_DNA"/>
</dbReference>
<dbReference type="RefSeq" id="WP_010661172.1">
    <property type="nucleotide sequence ID" value="NC_009667.1"/>
</dbReference>
<dbReference type="SMR" id="A6X1N3"/>
<dbReference type="STRING" id="439375.Oant_2423"/>
<dbReference type="KEGG" id="oan:Oant_2423"/>
<dbReference type="eggNOG" id="COG0377">
    <property type="taxonomic scope" value="Bacteria"/>
</dbReference>
<dbReference type="HOGENOM" id="CLU_055737_7_3_5"/>
<dbReference type="PhylomeDB" id="A6X1N3"/>
<dbReference type="Proteomes" id="UP000002301">
    <property type="component" value="Chromosome 1"/>
</dbReference>
<dbReference type="GO" id="GO:0005886">
    <property type="term" value="C:plasma membrane"/>
    <property type="evidence" value="ECO:0007669"/>
    <property type="project" value="UniProtKB-SubCell"/>
</dbReference>
<dbReference type="GO" id="GO:0045271">
    <property type="term" value="C:respiratory chain complex I"/>
    <property type="evidence" value="ECO:0007669"/>
    <property type="project" value="TreeGrafter"/>
</dbReference>
<dbReference type="GO" id="GO:0051539">
    <property type="term" value="F:4 iron, 4 sulfur cluster binding"/>
    <property type="evidence" value="ECO:0007669"/>
    <property type="project" value="UniProtKB-KW"/>
</dbReference>
<dbReference type="GO" id="GO:0005506">
    <property type="term" value="F:iron ion binding"/>
    <property type="evidence" value="ECO:0007669"/>
    <property type="project" value="UniProtKB-UniRule"/>
</dbReference>
<dbReference type="GO" id="GO:0008137">
    <property type="term" value="F:NADH dehydrogenase (ubiquinone) activity"/>
    <property type="evidence" value="ECO:0007669"/>
    <property type="project" value="InterPro"/>
</dbReference>
<dbReference type="GO" id="GO:0050136">
    <property type="term" value="F:NADH:ubiquinone reductase (non-electrogenic) activity"/>
    <property type="evidence" value="ECO:0007669"/>
    <property type="project" value="UniProtKB-UniRule"/>
</dbReference>
<dbReference type="GO" id="GO:0048038">
    <property type="term" value="F:quinone binding"/>
    <property type="evidence" value="ECO:0007669"/>
    <property type="project" value="UniProtKB-KW"/>
</dbReference>
<dbReference type="GO" id="GO:0009060">
    <property type="term" value="P:aerobic respiration"/>
    <property type="evidence" value="ECO:0007669"/>
    <property type="project" value="TreeGrafter"/>
</dbReference>
<dbReference type="GO" id="GO:0015990">
    <property type="term" value="P:electron transport coupled proton transport"/>
    <property type="evidence" value="ECO:0007669"/>
    <property type="project" value="TreeGrafter"/>
</dbReference>
<dbReference type="FunFam" id="3.40.50.12280:FF:000001">
    <property type="entry name" value="NADH-quinone oxidoreductase subunit B 2"/>
    <property type="match status" value="1"/>
</dbReference>
<dbReference type="Gene3D" id="3.40.50.12280">
    <property type="match status" value="1"/>
</dbReference>
<dbReference type="HAMAP" id="MF_01356">
    <property type="entry name" value="NDH1_NuoB"/>
    <property type="match status" value="1"/>
</dbReference>
<dbReference type="InterPro" id="IPR006137">
    <property type="entry name" value="NADH_UbQ_OxRdtase-like_20kDa"/>
</dbReference>
<dbReference type="InterPro" id="IPR006138">
    <property type="entry name" value="NADH_UQ_OxRdtase_20Kd_su"/>
</dbReference>
<dbReference type="NCBIfam" id="TIGR01957">
    <property type="entry name" value="nuoB_fam"/>
    <property type="match status" value="1"/>
</dbReference>
<dbReference type="NCBIfam" id="NF005012">
    <property type="entry name" value="PRK06411.1"/>
    <property type="match status" value="1"/>
</dbReference>
<dbReference type="PANTHER" id="PTHR11995">
    <property type="entry name" value="NADH DEHYDROGENASE"/>
    <property type="match status" value="1"/>
</dbReference>
<dbReference type="PANTHER" id="PTHR11995:SF14">
    <property type="entry name" value="NADH DEHYDROGENASE [UBIQUINONE] IRON-SULFUR PROTEIN 7, MITOCHONDRIAL"/>
    <property type="match status" value="1"/>
</dbReference>
<dbReference type="Pfam" id="PF01058">
    <property type="entry name" value="Oxidored_q6"/>
    <property type="match status" value="1"/>
</dbReference>
<dbReference type="SUPFAM" id="SSF56770">
    <property type="entry name" value="HydA/Nqo6-like"/>
    <property type="match status" value="1"/>
</dbReference>
<dbReference type="PROSITE" id="PS01150">
    <property type="entry name" value="COMPLEX1_20K"/>
    <property type="match status" value="1"/>
</dbReference>
<gene>
    <name evidence="2" type="primary">nuoB</name>
    <name type="ordered locus">Oant_2423</name>
</gene>
<feature type="chain" id="PRO_0000358438" description="NADH-quinone oxidoreductase subunit B">
    <location>
        <begin position="1"/>
        <end position="193"/>
    </location>
</feature>
<feature type="binding site" evidence="2">
    <location>
        <position position="72"/>
    </location>
    <ligand>
        <name>[4Fe-4S] cluster</name>
        <dbReference type="ChEBI" id="CHEBI:49883"/>
    </ligand>
</feature>
<feature type="binding site" evidence="2">
    <location>
        <position position="73"/>
    </location>
    <ligand>
        <name>[4Fe-4S] cluster</name>
        <dbReference type="ChEBI" id="CHEBI:49883"/>
    </ligand>
</feature>
<feature type="binding site" evidence="2">
    <location>
        <position position="137"/>
    </location>
    <ligand>
        <name>[4Fe-4S] cluster</name>
        <dbReference type="ChEBI" id="CHEBI:49883"/>
    </ligand>
</feature>
<feature type="binding site" evidence="2">
    <location>
        <position position="167"/>
    </location>
    <ligand>
        <name>[4Fe-4S] cluster</name>
        <dbReference type="ChEBI" id="CHEBI:49883"/>
    </ligand>
</feature>
<comment type="function">
    <text evidence="1">NDH-1 shuttles electrons from NADH, via FMN and iron-sulfur (Fe-S) centers, to quinones in the respiratory chain. Couples the redox reaction to proton translocation (for every two electrons transferred, four hydrogen ions are translocated across the cytoplasmic membrane), and thus conserves the redox energy in a proton gradient (By similarity).</text>
</comment>
<comment type="catalytic activity">
    <reaction evidence="2">
        <text>a quinone + NADH + 5 H(+)(in) = a quinol + NAD(+) + 4 H(+)(out)</text>
        <dbReference type="Rhea" id="RHEA:57888"/>
        <dbReference type="ChEBI" id="CHEBI:15378"/>
        <dbReference type="ChEBI" id="CHEBI:24646"/>
        <dbReference type="ChEBI" id="CHEBI:57540"/>
        <dbReference type="ChEBI" id="CHEBI:57945"/>
        <dbReference type="ChEBI" id="CHEBI:132124"/>
    </reaction>
</comment>
<comment type="cofactor">
    <cofactor evidence="2">
        <name>[4Fe-4S] cluster</name>
        <dbReference type="ChEBI" id="CHEBI:49883"/>
    </cofactor>
    <text evidence="2">Binds 1 [4Fe-4S] cluster.</text>
</comment>
<comment type="subunit">
    <text evidence="2">NDH-1 is composed of 14 different subunits. Subunits NuoB, C, D, E, F, and G constitute the peripheral sector of the complex.</text>
</comment>
<comment type="subcellular location">
    <subcellularLocation>
        <location evidence="2">Cell inner membrane</location>
        <topology evidence="2">Peripheral membrane protein</topology>
        <orientation evidence="2">Cytoplasmic side</orientation>
    </subcellularLocation>
</comment>
<comment type="similarity">
    <text evidence="2">Belongs to the complex I 20 kDa subunit family.</text>
</comment>
<evidence type="ECO:0000250" key="1"/>
<evidence type="ECO:0000255" key="2">
    <source>
        <dbReference type="HAMAP-Rule" id="MF_01356"/>
    </source>
</evidence>